<name>SYL_PROM3</name>
<keyword id="KW-0030">Aminoacyl-tRNA synthetase</keyword>
<keyword id="KW-0067">ATP-binding</keyword>
<keyword id="KW-0963">Cytoplasm</keyword>
<keyword id="KW-0436">Ligase</keyword>
<keyword id="KW-0547">Nucleotide-binding</keyword>
<keyword id="KW-0648">Protein biosynthesis</keyword>
<gene>
    <name evidence="1" type="primary">leuS</name>
    <name type="ordered locus">P9303_15061</name>
</gene>
<protein>
    <recommendedName>
        <fullName evidence="1">Leucine--tRNA ligase</fullName>
        <ecNumber evidence="1">6.1.1.4</ecNumber>
    </recommendedName>
    <alternativeName>
        <fullName evidence="1">Leucyl-tRNA synthetase</fullName>
        <shortName evidence="1">LeuRS</shortName>
    </alternativeName>
</protein>
<evidence type="ECO:0000255" key="1">
    <source>
        <dbReference type="HAMAP-Rule" id="MF_00049"/>
    </source>
</evidence>
<reference key="1">
    <citation type="journal article" date="2007" name="PLoS Genet.">
        <title>Patterns and implications of gene gain and loss in the evolution of Prochlorococcus.</title>
        <authorList>
            <person name="Kettler G.C."/>
            <person name="Martiny A.C."/>
            <person name="Huang K."/>
            <person name="Zucker J."/>
            <person name="Coleman M.L."/>
            <person name="Rodrigue S."/>
            <person name="Chen F."/>
            <person name="Lapidus A."/>
            <person name="Ferriera S."/>
            <person name="Johnson J."/>
            <person name="Steglich C."/>
            <person name="Church G.M."/>
            <person name="Richardson P."/>
            <person name="Chisholm S.W."/>
        </authorList>
    </citation>
    <scope>NUCLEOTIDE SEQUENCE [LARGE SCALE GENOMIC DNA]</scope>
    <source>
        <strain>MIT 9303</strain>
    </source>
</reference>
<comment type="catalytic activity">
    <reaction evidence="1">
        <text>tRNA(Leu) + L-leucine + ATP = L-leucyl-tRNA(Leu) + AMP + diphosphate</text>
        <dbReference type="Rhea" id="RHEA:11688"/>
        <dbReference type="Rhea" id="RHEA-COMP:9613"/>
        <dbReference type="Rhea" id="RHEA-COMP:9622"/>
        <dbReference type="ChEBI" id="CHEBI:30616"/>
        <dbReference type="ChEBI" id="CHEBI:33019"/>
        <dbReference type="ChEBI" id="CHEBI:57427"/>
        <dbReference type="ChEBI" id="CHEBI:78442"/>
        <dbReference type="ChEBI" id="CHEBI:78494"/>
        <dbReference type="ChEBI" id="CHEBI:456215"/>
        <dbReference type="EC" id="6.1.1.4"/>
    </reaction>
</comment>
<comment type="subcellular location">
    <subcellularLocation>
        <location evidence="1">Cytoplasm</location>
    </subcellularLocation>
</comment>
<comment type="similarity">
    <text evidence="1">Belongs to the class-I aminoacyl-tRNA synthetase family.</text>
</comment>
<feature type="chain" id="PRO_1000009393" description="Leucine--tRNA ligase">
    <location>
        <begin position="1"/>
        <end position="878"/>
    </location>
</feature>
<feature type="short sequence motif" description="'HIGH' region">
    <location>
        <begin position="56"/>
        <end position="66"/>
    </location>
</feature>
<feature type="short sequence motif" description="'KMSKS' region">
    <location>
        <begin position="630"/>
        <end position="634"/>
    </location>
</feature>
<feature type="binding site" evidence="1">
    <location>
        <position position="633"/>
    </location>
    <ligand>
        <name>ATP</name>
        <dbReference type="ChEBI" id="CHEBI:30616"/>
    </ligand>
</feature>
<accession>A2C9U0</accession>
<sequence length="878" mass="98546">MTESFPSTSASSHSSARYDPIELETRWQKEWLRQGLDRTPVAETNQKRFYALSMFPYPSGKLHMGHVRNYVITDVIARVQRMRGDAVLHPMGWDAFGLPAENAAIARNVDPGDWTDQNIAQMRAQLDRLGLSIDWDRQQATCHQDYYRWTQWLFLELFAGGLAYQKEATVNWDPIDKTVLANEQVDGEGRSWRSGALVEQRQLKQWFLRITDYADALIDDLDELTGWPERVRTMQANWIGRSHGAEIKFRVAGQTNSIITVFTTRPDTLHGASYVVLAPEHPLVEALTSPQQRIAVTAFCDLISQLSVKDRTAEDQPKRGVPIGAQVINPVNGESLPVWIADYVLADYGSGAVMGVPAHDERDFIFARSHELPIRIVVQMPDSDEHHNDGQAWTGAGVLVNSGAFDGLSTEEGKVAITTHGASKGWAQSKVQYRLRDWLISRQRYWGCPIPIIHCASCGIVPVPQEDLPVTLPRDIDLSGKGGSPLAQEQDWVEVKCPICGEKAHRETDTMDTFMCSSWYYLRFADPLNSQRPFDKDIVDEWLPVDQYVGGIEHAILHLLYARFFTKALHDRNLIGFKEPFNTLLTQGMVQGLTYRNTKNGSYISPELVSDEGDPRDPESGDKLEILFEKMSKSKYNGVDPAVVIDRYGADTARMFILFKAPPEKDLEWDDADVEGQFRFLQRLIRLIDSFVWPKTDEDNASISSANLTISSADLSEEEINMRRATHMAIEAITEDLSGDIQLNTAISELMKLSNSLGGKLDKVRTEVAAEALSVLVRLMAPFAPHLAEEFWMKLHGQGSIHQQSWPIIDPSALVLETIELVIQVKGKVRGTIQVPANADKTALEELALKSDIAVKWLEGQSPRRVIIVPGKLVNLVP</sequence>
<organism>
    <name type="scientific">Prochlorococcus marinus (strain MIT 9303)</name>
    <dbReference type="NCBI Taxonomy" id="59922"/>
    <lineage>
        <taxon>Bacteria</taxon>
        <taxon>Bacillati</taxon>
        <taxon>Cyanobacteriota</taxon>
        <taxon>Cyanophyceae</taxon>
        <taxon>Synechococcales</taxon>
        <taxon>Prochlorococcaceae</taxon>
        <taxon>Prochlorococcus</taxon>
    </lineage>
</organism>
<dbReference type="EC" id="6.1.1.4" evidence="1"/>
<dbReference type="EMBL" id="CP000554">
    <property type="protein sequence ID" value="ABM78250.1"/>
    <property type="molecule type" value="Genomic_DNA"/>
</dbReference>
<dbReference type="RefSeq" id="WP_011826143.1">
    <property type="nucleotide sequence ID" value="NC_008820.1"/>
</dbReference>
<dbReference type="SMR" id="A2C9U0"/>
<dbReference type="STRING" id="59922.P9303_15061"/>
<dbReference type="KEGG" id="pmf:P9303_15061"/>
<dbReference type="HOGENOM" id="CLU_004427_0_0_3"/>
<dbReference type="BioCyc" id="PMAR59922:G1G80-1303-MONOMER"/>
<dbReference type="Proteomes" id="UP000002274">
    <property type="component" value="Chromosome"/>
</dbReference>
<dbReference type="GO" id="GO:0005829">
    <property type="term" value="C:cytosol"/>
    <property type="evidence" value="ECO:0007669"/>
    <property type="project" value="TreeGrafter"/>
</dbReference>
<dbReference type="GO" id="GO:0002161">
    <property type="term" value="F:aminoacyl-tRNA deacylase activity"/>
    <property type="evidence" value="ECO:0007669"/>
    <property type="project" value="InterPro"/>
</dbReference>
<dbReference type="GO" id="GO:0005524">
    <property type="term" value="F:ATP binding"/>
    <property type="evidence" value="ECO:0007669"/>
    <property type="project" value="UniProtKB-UniRule"/>
</dbReference>
<dbReference type="GO" id="GO:0004823">
    <property type="term" value="F:leucine-tRNA ligase activity"/>
    <property type="evidence" value="ECO:0007669"/>
    <property type="project" value="UniProtKB-UniRule"/>
</dbReference>
<dbReference type="GO" id="GO:0006429">
    <property type="term" value="P:leucyl-tRNA aminoacylation"/>
    <property type="evidence" value="ECO:0007669"/>
    <property type="project" value="UniProtKB-UniRule"/>
</dbReference>
<dbReference type="CDD" id="cd07958">
    <property type="entry name" value="Anticodon_Ia_Leu_BEm"/>
    <property type="match status" value="1"/>
</dbReference>
<dbReference type="CDD" id="cd00812">
    <property type="entry name" value="LeuRS_core"/>
    <property type="match status" value="1"/>
</dbReference>
<dbReference type="FunFam" id="3.40.50.620:FF:000003">
    <property type="entry name" value="Leucine--tRNA ligase"/>
    <property type="match status" value="1"/>
</dbReference>
<dbReference type="FunFam" id="1.10.730.10:FF:000011">
    <property type="entry name" value="Leucine--tRNA ligase chloroplastic/mitochondrial"/>
    <property type="match status" value="1"/>
</dbReference>
<dbReference type="FunFam" id="3.40.50.620:FF:000100">
    <property type="entry name" value="probable leucine--tRNA ligase, mitochondrial"/>
    <property type="match status" value="1"/>
</dbReference>
<dbReference type="Gene3D" id="3.40.50.620">
    <property type="entry name" value="HUPs"/>
    <property type="match status" value="2"/>
</dbReference>
<dbReference type="Gene3D" id="1.10.730.10">
    <property type="entry name" value="Isoleucyl-tRNA Synthetase, Domain 1"/>
    <property type="match status" value="1"/>
</dbReference>
<dbReference type="Gene3D" id="3.90.740.10">
    <property type="entry name" value="Valyl/Leucyl/Isoleucyl-tRNA synthetase, editing domain"/>
    <property type="match status" value="1"/>
</dbReference>
<dbReference type="HAMAP" id="MF_00049_B">
    <property type="entry name" value="Leu_tRNA_synth_B"/>
    <property type="match status" value="1"/>
</dbReference>
<dbReference type="InterPro" id="IPR001412">
    <property type="entry name" value="aa-tRNA-synth_I_CS"/>
</dbReference>
<dbReference type="InterPro" id="IPR002300">
    <property type="entry name" value="aa-tRNA-synth_Ia"/>
</dbReference>
<dbReference type="InterPro" id="IPR002302">
    <property type="entry name" value="Leu-tRNA-ligase"/>
</dbReference>
<dbReference type="InterPro" id="IPR025709">
    <property type="entry name" value="Leu_tRNA-synth_edit"/>
</dbReference>
<dbReference type="InterPro" id="IPR013155">
    <property type="entry name" value="M/V/L/I-tRNA-synth_anticd-bd"/>
</dbReference>
<dbReference type="InterPro" id="IPR015413">
    <property type="entry name" value="Methionyl/Leucyl_tRNA_Synth"/>
</dbReference>
<dbReference type="InterPro" id="IPR014729">
    <property type="entry name" value="Rossmann-like_a/b/a_fold"/>
</dbReference>
<dbReference type="InterPro" id="IPR009080">
    <property type="entry name" value="tRNAsynth_Ia_anticodon-bd"/>
</dbReference>
<dbReference type="InterPro" id="IPR009008">
    <property type="entry name" value="Val/Leu/Ile-tRNA-synth_edit"/>
</dbReference>
<dbReference type="NCBIfam" id="TIGR00396">
    <property type="entry name" value="leuS_bact"/>
    <property type="match status" value="1"/>
</dbReference>
<dbReference type="PANTHER" id="PTHR43740:SF2">
    <property type="entry name" value="LEUCINE--TRNA LIGASE, MITOCHONDRIAL"/>
    <property type="match status" value="1"/>
</dbReference>
<dbReference type="PANTHER" id="PTHR43740">
    <property type="entry name" value="LEUCYL-TRNA SYNTHETASE"/>
    <property type="match status" value="1"/>
</dbReference>
<dbReference type="Pfam" id="PF08264">
    <property type="entry name" value="Anticodon_1"/>
    <property type="match status" value="1"/>
</dbReference>
<dbReference type="Pfam" id="PF00133">
    <property type="entry name" value="tRNA-synt_1"/>
    <property type="match status" value="2"/>
</dbReference>
<dbReference type="Pfam" id="PF13603">
    <property type="entry name" value="tRNA-synt_1_2"/>
    <property type="match status" value="1"/>
</dbReference>
<dbReference type="Pfam" id="PF09334">
    <property type="entry name" value="tRNA-synt_1g"/>
    <property type="match status" value="1"/>
</dbReference>
<dbReference type="PRINTS" id="PR00985">
    <property type="entry name" value="TRNASYNTHLEU"/>
</dbReference>
<dbReference type="SUPFAM" id="SSF47323">
    <property type="entry name" value="Anticodon-binding domain of a subclass of class I aminoacyl-tRNA synthetases"/>
    <property type="match status" value="1"/>
</dbReference>
<dbReference type="SUPFAM" id="SSF52374">
    <property type="entry name" value="Nucleotidylyl transferase"/>
    <property type="match status" value="1"/>
</dbReference>
<dbReference type="SUPFAM" id="SSF50677">
    <property type="entry name" value="ValRS/IleRS/LeuRS editing domain"/>
    <property type="match status" value="1"/>
</dbReference>
<dbReference type="PROSITE" id="PS00178">
    <property type="entry name" value="AA_TRNA_LIGASE_I"/>
    <property type="match status" value="1"/>
</dbReference>
<proteinExistence type="inferred from homology"/>